<feature type="chain" id="PRO_0000195506" description="ATP synthase F(0) complex subunit 8">
    <location>
        <begin position="1"/>
        <end position="68"/>
    </location>
</feature>
<feature type="transmembrane region" description="Helical" evidence="4">
    <location>
        <begin position="8"/>
        <end position="24"/>
    </location>
</feature>
<feature type="modified residue" description="N6-acetyllysine; alternate" evidence="2">
    <location>
        <position position="54"/>
    </location>
</feature>
<feature type="modified residue" description="N6-succinyllysine; alternate" evidence="2">
    <location>
        <position position="54"/>
    </location>
</feature>
<feature type="modified residue" description="N6-acetyllysine" evidence="2">
    <location>
        <position position="57"/>
    </location>
</feature>
<comment type="function">
    <text evidence="1 3">Subunit 8, of the mitochondrial membrane ATP synthase complex (F(1)F(0) ATP synthase or Complex V) that produces ATP from ADP in the presence of a proton gradient across the membrane which is generated by electron transport complexes of the respiratory chain. ATP synthase complex consist of a soluble F(1) head domain - the catalytic core - and a membrane F(1) domain - the membrane proton channel. These two domains are linked by a central stalk rotating inside the F(1) region and a stationary peripheral stalk. During catalysis, ATP synthesis in the catalytic domain of F(1) is coupled via a rotary mechanism of the central stalk subunits to proton translocation (By similarity). In vivo, can only synthesize ATP although its ATP hydrolase activity can be activated artificially in vitro (By similarity). Part of the complex F(0) domain (By similarity).</text>
</comment>
<comment type="subunit">
    <text evidence="1">Component of the ATP synthase complex composed at least of ATP5F1A/subunit alpha, ATP5F1B/subunit beta, ATP5MC1/subunit c (homooctomer), MT-ATP6/subunit a, MT-ATP8/subunit 8, ATP5ME/subunit e, ATP5MF/subunit f, ATP5MG/subunit g, ATP5MK/subunit k, ATP5MJ/subunit j, ATP5F1C/subunit gamma, ATP5F1D/subunit delta, ATP5F1E/subunit epsilon, ATP5PF/subunit F6, ATP5PB/subunit b, ATP5PD/subunit d, ATP5PO/subunit OSCP. ATP synthase complex consists of a soluble F(1) head domain (subunits alpha(3) and beta(3)) - the catalytic core - and a membrane F(0) domain - the membrane proton channel (subunits c, a, 8, e, f, g, k and j). These two domains are linked by a central stalk (subunits gamma, delta, and epsilon) rotating inside the F1 region and a stationary peripheral stalk (subunits F6, b, d, and OSCP). Interacts with PRICKLE3.</text>
</comment>
<comment type="subcellular location">
    <subcellularLocation>
        <location>Mitochondrion membrane</location>
        <topology>Single-pass membrane protein</topology>
    </subcellularLocation>
</comment>
<comment type="similarity">
    <text evidence="5">Belongs to the ATPase protein 8 family.</text>
</comment>
<evidence type="ECO:0000250" key="1">
    <source>
        <dbReference type="UniProtKB" id="P03928"/>
    </source>
</evidence>
<evidence type="ECO:0000250" key="2">
    <source>
        <dbReference type="UniProtKB" id="P03930"/>
    </source>
</evidence>
<evidence type="ECO:0000250" key="3">
    <source>
        <dbReference type="UniProtKB" id="P19483"/>
    </source>
</evidence>
<evidence type="ECO:0000255" key="4"/>
<evidence type="ECO:0000305" key="5"/>
<accession>O03199</accession>
<dbReference type="EMBL" id="Y07726">
    <property type="protein sequence ID" value="CAA69010.1"/>
    <property type="molecule type" value="Genomic_DNA"/>
</dbReference>
<dbReference type="RefSeq" id="NP_007437.1">
    <property type="nucleotide sequence ID" value="NC_001808.1"/>
</dbReference>
<dbReference type="SMR" id="O03199"/>
<dbReference type="GeneID" id="808101"/>
<dbReference type="CTD" id="4509"/>
<dbReference type="OMA" id="LDTSTWF"/>
<dbReference type="GO" id="GO:0031966">
    <property type="term" value="C:mitochondrial membrane"/>
    <property type="evidence" value="ECO:0007669"/>
    <property type="project" value="UniProtKB-SubCell"/>
</dbReference>
<dbReference type="GO" id="GO:0045259">
    <property type="term" value="C:proton-transporting ATP synthase complex"/>
    <property type="evidence" value="ECO:0000250"/>
    <property type="project" value="UniProtKB"/>
</dbReference>
<dbReference type="GO" id="GO:0015078">
    <property type="term" value="F:proton transmembrane transporter activity"/>
    <property type="evidence" value="ECO:0007669"/>
    <property type="project" value="InterPro"/>
</dbReference>
<dbReference type="GO" id="GO:0015986">
    <property type="term" value="P:proton motive force-driven ATP synthesis"/>
    <property type="evidence" value="ECO:0007669"/>
    <property type="project" value="InterPro"/>
</dbReference>
<dbReference type="InterPro" id="IPR039017">
    <property type="entry name" value="ATP8_mammal"/>
</dbReference>
<dbReference type="InterPro" id="IPR001421">
    <property type="entry name" value="ATP8_metazoa"/>
</dbReference>
<dbReference type="PANTHER" id="PTHR13722">
    <property type="entry name" value="ATP SYNTHASE PROTEIN 8"/>
    <property type="match status" value="1"/>
</dbReference>
<dbReference type="PANTHER" id="PTHR13722:SF0">
    <property type="entry name" value="ATP SYNTHASE PROTEIN 8"/>
    <property type="match status" value="1"/>
</dbReference>
<dbReference type="Pfam" id="PF00895">
    <property type="entry name" value="ATP-synt_8"/>
    <property type="match status" value="1"/>
</dbReference>
<reference key="1">
    <citation type="journal article" date="1997" name="Mol. Phylogenet. Evol.">
        <title>The complete mitochondrial DNA sequence of the white rhinoceros, Ceratotherium simum, and comparison with the mtDNA sequence of the Indian rhinoceros, Rhinoceros unicornis.</title>
        <authorList>
            <person name="Xu X."/>
            <person name="Arnason U."/>
        </authorList>
    </citation>
    <scope>NUCLEOTIDE SEQUENCE [GENOMIC DNA]</scope>
</reference>
<keyword id="KW-0007">Acetylation</keyword>
<keyword id="KW-0066">ATP synthesis</keyword>
<keyword id="KW-0138">CF(0)</keyword>
<keyword id="KW-0375">Hydrogen ion transport</keyword>
<keyword id="KW-0406">Ion transport</keyword>
<keyword id="KW-0472">Membrane</keyword>
<keyword id="KW-0496">Mitochondrion</keyword>
<keyword id="KW-0812">Transmembrane</keyword>
<keyword id="KW-1133">Transmembrane helix</keyword>
<keyword id="KW-0813">Transport</keyword>
<protein>
    <recommendedName>
        <fullName evidence="1">ATP synthase F(0) complex subunit 8</fullName>
    </recommendedName>
    <alternativeName>
        <fullName>A6L</fullName>
    </alternativeName>
    <alternativeName>
        <fullName>F-ATPase subunit 8</fullName>
    </alternativeName>
</protein>
<gene>
    <name evidence="1" type="primary">MT-ATP8</name>
    <name type="synonym">ATP8</name>
    <name type="synonym">ATPASE8</name>
    <name type="synonym">MTATP8</name>
</gene>
<organism>
    <name type="scientific">Ceratotherium simum</name>
    <name type="common">White rhinoceros</name>
    <name type="synonym">Square-lipped rhinoceros</name>
    <dbReference type="NCBI Taxonomy" id="9807"/>
    <lineage>
        <taxon>Eukaryota</taxon>
        <taxon>Metazoa</taxon>
        <taxon>Chordata</taxon>
        <taxon>Craniata</taxon>
        <taxon>Vertebrata</taxon>
        <taxon>Euteleostomi</taxon>
        <taxon>Mammalia</taxon>
        <taxon>Eutheria</taxon>
        <taxon>Laurasiatheria</taxon>
        <taxon>Perissodactyla</taxon>
        <taxon>Rhinocerotidae</taxon>
        <taxon>Ceratotherium</taxon>
    </lineage>
</organism>
<name>ATP8_CERSI</name>
<proteinExistence type="inferred from homology"/>
<geneLocation type="mitochondrion"/>
<sequence>MPQLDTSTWSITIVSMIITLFIMFQLKLSKYSYPSSPELKLTKTPTHTTPWESKWTKTYLPLSLPQQS</sequence>